<protein>
    <recommendedName>
        <fullName evidence="2">Photosystem II reaction center protein H</fullName>
        <shortName evidence="2">PSII-H</shortName>
    </recommendedName>
    <alternativeName>
        <fullName evidence="2">Photosystem II 10 kDa phosphoprotein</fullName>
    </alternativeName>
</protein>
<proteinExistence type="evidence at transcript level"/>
<keyword id="KW-0150">Chloroplast</keyword>
<keyword id="KW-0472">Membrane</keyword>
<keyword id="KW-0597">Phosphoprotein</keyword>
<keyword id="KW-0602">Photosynthesis</keyword>
<keyword id="KW-0604">Photosystem II</keyword>
<keyword id="KW-0934">Plastid</keyword>
<keyword id="KW-0793">Thylakoid</keyword>
<keyword id="KW-0812">Transmembrane</keyword>
<keyword id="KW-1133">Transmembrane helix</keyword>
<accession>Q85FJ4</accession>
<geneLocation type="chloroplast"/>
<comment type="function">
    <text evidence="2">One of the components of the core complex of photosystem II (PSII), required for its stability and/or assembly. PSII is a light-driven water:plastoquinone oxidoreductase that uses light energy to abstract electrons from H(2)O, generating O(2) and a proton gradient subsequently used for ATP formation. It consists of a core antenna complex that captures photons, and an electron transfer chain that converts photonic excitation into a charge separation.</text>
</comment>
<comment type="subunit">
    <text evidence="2">PSII is composed of 1 copy each of membrane proteins PsbA, PsbB, PsbC, PsbD, PsbE, PsbF, PsbH, PsbI, PsbJ, PsbK, PsbL, PsbM, PsbT, PsbX, PsbY, PsbZ, Psb30/Ycf12, at least 3 peripheral proteins of the oxygen-evolving complex and a large number of cofactors. It forms dimeric complexes.</text>
</comment>
<comment type="subcellular location">
    <subcellularLocation>
        <location evidence="2">Plastid</location>
        <location evidence="2">Chloroplast thylakoid membrane</location>
        <topology evidence="2">Single-pass membrane protein</topology>
    </subcellularLocation>
</comment>
<comment type="PTM">
    <text evidence="2">Phosphorylation is a light-dependent reaction catalyzed by a membrane-bound kinase; phosphorylation occurs on Thr residue(s) in the N-terminus of the protein.</text>
</comment>
<comment type="similarity">
    <text evidence="2">Belongs to the PsbH family.</text>
</comment>
<dbReference type="EMBL" id="AY178864">
    <property type="protein sequence ID" value="AAP29419.1"/>
    <property type="molecule type" value="Genomic_DNA"/>
</dbReference>
<dbReference type="RefSeq" id="NP_848088.1">
    <property type="nucleotide sequence ID" value="NC_004766.1"/>
</dbReference>
<dbReference type="SMR" id="Q85FJ4"/>
<dbReference type="GeneID" id="807425"/>
<dbReference type="GO" id="GO:0009535">
    <property type="term" value="C:chloroplast thylakoid membrane"/>
    <property type="evidence" value="ECO:0007669"/>
    <property type="project" value="UniProtKB-SubCell"/>
</dbReference>
<dbReference type="GO" id="GO:0009523">
    <property type="term" value="C:photosystem II"/>
    <property type="evidence" value="ECO:0007669"/>
    <property type="project" value="UniProtKB-KW"/>
</dbReference>
<dbReference type="GO" id="GO:0042301">
    <property type="term" value="F:phosphate ion binding"/>
    <property type="evidence" value="ECO:0007669"/>
    <property type="project" value="InterPro"/>
</dbReference>
<dbReference type="GO" id="GO:0015979">
    <property type="term" value="P:photosynthesis"/>
    <property type="evidence" value="ECO:0007669"/>
    <property type="project" value="UniProtKB-UniRule"/>
</dbReference>
<dbReference type="GO" id="GO:0050821">
    <property type="term" value="P:protein stabilization"/>
    <property type="evidence" value="ECO:0007669"/>
    <property type="project" value="InterPro"/>
</dbReference>
<dbReference type="Gene3D" id="1.20.5.880">
    <property type="entry name" value="Photosystem II reaction center protein H"/>
    <property type="match status" value="1"/>
</dbReference>
<dbReference type="HAMAP" id="MF_00752">
    <property type="entry name" value="PSII_PsbH"/>
    <property type="match status" value="1"/>
</dbReference>
<dbReference type="InterPro" id="IPR001056">
    <property type="entry name" value="PSII_PsbH"/>
</dbReference>
<dbReference type="InterPro" id="IPR036863">
    <property type="entry name" value="PSII_PsbH_sf"/>
</dbReference>
<dbReference type="NCBIfam" id="NF002728">
    <property type="entry name" value="PRK02624.1"/>
    <property type="match status" value="1"/>
</dbReference>
<dbReference type="PANTHER" id="PTHR34469">
    <property type="entry name" value="PHOTOSYSTEM II REACTION CENTER PROTEIN H"/>
    <property type="match status" value="1"/>
</dbReference>
<dbReference type="PANTHER" id="PTHR34469:SF4">
    <property type="entry name" value="PHOTOSYSTEM II REACTION CENTER PROTEIN H"/>
    <property type="match status" value="1"/>
</dbReference>
<dbReference type="Pfam" id="PF00737">
    <property type="entry name" value="PsbH"/>
    <property type="match status" value="1"/>
</dbReference>
<dbReference type="SUPFAM" id="SSF161025">
    <property type="entry name" value="Photosystem II 10 kDa phosphoprotein PsbH"/>
    <property type="match status" value="1"/>
</dbReference>
<reference key="1">
    <citation type="journal article" date="2003" name="DNA Res.">
        <title>Complete nucleotide sequence of the chloroplast genome from a leptosporangiate fern, Adiantum capillus-veneris L.</title>
        <authorList>
            <person name="Wolf P.G."/>
            <person name="Rowe C.A."/>
            <person name="Sinclair R.B."/>
            <person name="Hasebe M."/>
        </authorList>
    </citation>
    <scope>NUCLEOTIDE SEQUENCE [LARGE SCALE GENOMIC DNA]</scope>
</reference>
<reference key="2">
    <citation type="journal article" date="2004" name="Gene">
        <title>High levels of RNA editing in a vascular plant chloroplast genome: analysis of transcripts from the fern Adiantum capillus-veneris.</title>
        <authorList>
            <person name="Wolf P.G."/>
            <person name="Rowe C.A."/>
            <person name="Hasebe M."/>
        </authorList>
    </citation>
    <scope>NUCLEOTIDE SEQUENCE [GENOMIC DNA]</scope>
    <scope>ABSENCE OF RNA EDITING</scope>
    <source>
        <tissue>Frond</tissue>
    </source>
</reference>
<gene>
    <name evidence="2" type="primary">psbH</name>
</gene>
<feature type="initiator methionine" description="Removed" evidence="1">
    <location>
        <position position="1"/>
    </location>
</feature>
<feature type="chain" id="PRO_0000070495" description="Photosystem II reaction center protein H">
    <location>
        <begin position="2"/>
        <end position="74"/>
    </location>
</feature>
<feature type="transmembrane region" description="Helical" evidence="2">
    <location>
        <begin position="41"/>
        <end position="61"/>
    </location>
</feature>
<feature type="modified residue" description="Phosphothreonine" evidence="2">
    <location>
        <position position="3"/>
    </location>
</feature>
<sequence length="74" mass="8080">MATKVLDETPKGKPKISFLGMVLKPLNSEYGKVAPGWGTTPLMGFFMALFAIFLVTILEIYNSSVLLDGIAISW</sequence>
<organism>
    <name type="scientific">Adiantum capillus-veneris</name>
    <name type="common">Maidenhair fern</name>
    <dbReference type="NCBI Taxonomy" id="13818"/>
    <lineage>
        <taxon>Eukaryota</taxon>
        <taxon>Viridiplantae</taxon>
        <taxon>Streptophyta</taxon>
        <taxon>Embryophyta</taxon>
        <taxon>Tracheophyta</taxon>
        <taxon>Polypodiopsida</taxon>
        <taxon>Polypodiidae</taxon>
        <taxon>Polypodiales</taxon>
        <taxon>Pteridineae</taxon>
        <taxon>Pteridaceae</taxon>
        <taxon>Vittarioideae</taxon>
        <taxon>Adiantum</taxon>
    </lineage>
</organism>
<evidence type="ECO:0000250" key="1">
    <source>
        <dbReference type="UniProtKB" id="P56780"/>
    </source>
</evidence>
<evidence type="ECO:0000255" key="2">
    <source>
        <dbReference type="HAMAP-Rule" id="MF_00752"/>
    </source>
</evidence>
<name>PSBH_ADICA</name>